<evidence type="ECO:0000255" key="1">
    <source>
        <dbReference type="HAMAP-Rule" id="MF_00413"/>
    </source>
</evidence>
<accession>B5R3X9</accession>
<name>TUSA_SALEP</name>
<sequence length="81" mass="9193">MSDLFSSPDHTLDALGLRCPEPVMMVRKTVRNMQTGETLLIIADDPATTRDIPGFCTFMEHDLLAQETEGLPYRYLLRKAH</sequence>
<comment type="function">
    <text evidence="1">Sulfur carrier protein involved in sulfur trafficking in the cell. Part of a sulfur-relay system required for 2-thiolation during synthesis of 2-thiouridine of the modified wobble base 5-methylaminomethyl-2-thiouridine (mnm(5)s(2)U) in tRNA. Interacts with IscS and stimulates its cysteine desulfurase activity. Accepts an activated sulfur from IscS, which is then transferred to TusD, and thus determines the direction of sulfur flow from IscS to 2-thiouridine formation. Also appears to be involved in sulfur transfer for the biosynthesis of molybdopterin.</text>
</comment>
<comment type="pathway">
    <text evidence="1">tRNA modification.</text>
</comment>
<comment type="subunit">
    <text evidence="1">Interacts with IscS.</text>
</comment>
<comment type="subcellular location">
    <subcellularLocation>
        <location evidence="1">Cytoplasm</location>
    </subcellularLocation>
</comment>
<comment type="similarity">
    <text evidence="1">Belongs to the sulfur carrier protein TusA family.</text>
</comment>
<reference key="1">
    <citation type="journal article" date="2008" name="Genome Res.">
        <title>Comparative genome analysis of Salmonella enteritidis PT4 and Salmonella gallinarum 287/91 provides insights into evolutionary and host adaptation pathways.</title>
        <authorList>
            <person name="Thomson N.R."/>
            <person name="Clayton D.J."/>
            <person name="Windhorst D."/>
            <person name="Vernikos G."/>
            <person name="Davidson S."/>
            <person name="Churcher C."/>
            <person name="Quail M.A."/>
            <person name="Stevens M."/>
            <person name="Jones M.A."/>
            <person name="Watson M."/>
            <person name="Barron A."/>
            <person name="Layton A."/>
            <person name="Pickard D."/>
            <person name="Kingsley R.A."/>
            <person name="Bignell A."/>
            <person name="Clark L."/>
            <person name="Harris B."/>
            <person name="Ormond D."/>
            <person name="Abdellah Z."/>
            <person name="Brooks K."/>
            <person name="Cherevach I."/>
            <person name="Chillingworth T."/>
            <person name="Woodward J."/>
            <person name="Norberczak H."/>
            <person name="Lord A."/>
            <person name="Arrowsmith C."/>
            <person name="Jagels K."/>
            <person name="Moule S."/>
            <person name="Mungall K."/>
            <person name="Saunders M."/>
            <person name="Whitehead S."/>
            <person name="Chabalgoity J.A."/>
            <person name="Maskell D."/>
            <person name="Humphreys T."/>
            <person name="Roberts M."/>
            <person name="Barrow P.A."/>
            <person name="Dougan G."/>
            <person name="Parkhill J."/>
        </authorList>
    </citation>
    <scope>NUCLEOTIDE SEQUENCE [LARGE SCALE GENOMIC DNA]</scope>
    <source>
        <strain>P125109</strain>
    </source>
</reference>
<feature type="chain" id="PRO_1000199928" description="Sulfur carrier protein TusA">
    <location>
        <begin position="1"/>
        <end position="81"/>
    </location>
</feature>
<feature type="active site" description="Cysteine persulfide intermediate" evidence="1">
    <location>
        <position position="19"/>
    </location>
</feature>
<keyword id="KW-0963">Cytoplasm</keyword>
<keyword id="KW-0819">tRNA processing</keyword>
<protein>
    <recommendedName>
        <fullName evidence="1">Sulfur carrier protein TusA</fullName>
    </recommendedName>
    <alternativeName>
        <fullName evidence="1">Sulfur mediator TusA</fullName>
    </alternativeName>
    <alternativeName>
        <fullName evidence="1">Sulfur transfer protein TusA</fullName>
    </alternativeName>
    <alternativeName>
        <fullName evidence="1">tRNA 2-thiouridine synthesizing protein A</fullName>
    </alternativeName>
</protein>
<organism>
    <name type="scientific">Salmonella enteritidis PT4 (strain P125109)</name>
    <dbReference type="NCBI Taxonomy" id="550537"/>
    <lineage>
        <taxon>Bacteria</taxon>
        <taxon>Pseudomonadati</taxon>
        <taxon>Pseudomonadota</taxon>
        <taxon>Gammaproteobacteria</taxon>
        <taxon>Enterobacterales</taxon>
        <taxon>Enterobacteriaceae</taxon>
        <taxon>Salmonella</taxon>
    </lineage>
</organism>
<dbReference type="EMBL" id="AM933172">
    <property type="protein sequence ID" value="CAR34977.1"/>
    <property type="molecule type" value="Genomic_DNA"/>
</dbReference>
<dbReference type="RefSeq" id="WP_001541054.1">
    <property type="nucleotide sequence ID" value="NC_011294.1"/>
</dbReference>
<dbReference type="SMR" id="B5R3X9"/>
<dbReference type="GeneID" id="66757902"/>
<dbReference type="KEGG" id="set:SEN3401"/>
<dbReference type="HOGENOM" id="CLU_165255_5_0_6"/>
<dbReference type="Proteomes" id="UP000000613">
    <property type="component" value="Chromosome"/>
</dbReference>
<dbReference type="GO" id="GO:0005737">
    <property type="term" value="C:cytoplasm"/>
    <property type="evidence" value="ECO:0007669"/>
    <property type="project" value="UniProtKB-SubCell"/>
</dbReference>
<dbReference type="GO" id="GO:0097163">
    <property type="term" value="F:sulfur carrier activity"/>
    <property type="evidence" value="ECO:0007669"/>
    <property type="project" value="UniProtKB-UniRule"/>
</dbReference>
<dbReference type="GO" id="GO:0002143">
    <property type="term" value="P:tRNA wobble position uridine thiolation"/>
    <property type="evidence" value="ECO:0007669"/>
    <property type="project" value="InterPro"/>
</dbReference>
<dbReference type="CDD" id="cd03423">
    <property type="entry name" value="SirA"/>
    <property type="match status" value="1"/>
</dbReference>
<dbReference type="Gene3D" id="3.30.110.40">
    <property type="entry name" value="TusA-like domain"/>
    <property type="match status" value="1"/>
</dbReference>
<dbReference type="HAMAP" id="MF_00413">
    <property type="entry name" value="Thiourid_synth_A"/>
    <property type="match status" value="1"/>
</dbReference>
<dbReference type="InterPro" id="IPR022931">
    <property type="entry name" value="Sulphur_carrier_TusA"/>
</dbReference>
<dbReference type="InterPro" id="IPR001455">
    <property type="entry name" value="TusA-like"/>
</dbReference>
<dbReference type="InterPro" id="IPR036868">
    <property type="entry name" value="TusA-like_sf"/>
</dbReference>
<dbReference type="NCBIfam" id="NF001423">
    <property type="entry name" value="PRK00299.1"/>
    <property type="match status" value="1"/>
</dbReference>
<dbReference type="PANTHER" id="PTHR33279:SF2">
    <property type="entry name" value="SULFUR CARRIER PROTEIN TUSA"/>
    <property type="match status" value="1"/>
</dbReference>
<dbReference type="PANTHER" id="PTHR33279">
    <property type="entry name" value="SULFUR CARRIER PROTEIN YEDF-RELATED"/>
    <property type="match status" value="1"/>
</dbReference>
<dbReference type="Pfam" id="PF01206">
    <property type="entry name" value="TusA"/>
    <property type="match status" value="1"/>
</dbReference>
<dbReference type="SUPFAM" id="SSF64307">
    <property type="entry name" value="SirA-like"/>
    <property type="match status" value="1"/>
</dbReference>
<dbReference type="PROSITE" id="PS01148">
    <property type="entry name" value="UPF0033"/>
    <property type="match status" value="1"/>
</dbReference>
<proteinExistence type="inferred from homology"/>
<gene>
    <name evidence="1" type="primary">tusA</name>
    <name type="ordered locus">SEN3401</name>
</gene>